<keyword id="KW-0067">ATP-binding</keyword>
<keyword id="KW-0963">Cytoplasm</keyword>
<keyword id="KW-0460">Magnesium</keyword>
<keyword id="KW-0479">Metal-binding</keyword>
<keyword id="KW-0547">Nucleotide-binding</keyword>
<keyword id="KW-0554">One-carbon metabolism</keyword>
<keyword id="KW-0630">Potassium</keyword>
<keyword id="KW-0808">Transferase</keyword>
<organism>
    <name type="scientific">Streptococcus pneumoniae (strain ATCC 700669 / Spain 23F-1)</name>
    <dbReference type="NCBI Taxonomy" id="561276"/>
    <lineage>
        <taxon>Bacteria</taxon>
        <taxon>Bacillati</taxon>
        <taxon>Bacillota</taxon>
        <taxon>Bacilli</taxon>
        <taxon>Lactobacillales</taxon>
        <taxon>Streptococcaceae</taxon>
        <taxon>Streptococcus</taxon>
    </lineage>
</organism>
<gene>
    <name evidence="1" type="primary">metK</name>
    <name type="ordered locus">SPN23F06840</name>
</gene>
<sequence length="396" mass="43114">MSERKLFTSESVSEGHPDKIADQISDAILDAILAKDPEAHVAAETAVYTGSVHVFGEISTNAYVDINRVVRDTIAEIGYTNTEYGFSAETVGVHPSLVEQSPDIAQGVNEALEVRGNADQDPLDLIGAGDQGLMFGFAVDETEELMPLPIALSHKLVRRLAELRKSGEISYLRPDAKSQVTVEYDENDRPVRVDTVVISTQHDPEATNEQIHQDVINKVIKEVIPSSYLDDKTKFFINPTGRFVIGGPQGDSGLTGRKIIVDTYGGYSRHGGGAFSGKDATKVDRSASYAARYIAKNIVAAGLAKKAEVQLAYAIGVAQPVSVRIDTFGTGTVAESQLEKAARQIFDLRPAGIIQMLDLKRPIYRQTSAYGHMGRTDIDLPWERLDKVDALKEAVK</sequence>
<dbReference type="EC" id="2.5.1.6" evidence="1"/>
<dbReference type="EMBL" id="FM211187">
    <property type="protein sequence ID" value="CAR68530.1"/>
    <property type="molecule type" value="Genomic_DNA"/>
</dbReference>
<dbReference type="RefSeq" id="WP_000003936.1">
    <property type="nucleotide sequence ID" value="NC_011900.1"/>
</dbReference>
<dbReference type="SMR" id="B8ZNB7"/>
<dbReference type="KEGG" id="sne:SPN23F06840"/>
<dbReference type="HOGENOM" id="CLU_041802_1_1_9"/>
<dbReference type="UniPathway" id="UPA00315">
    <property type="reaction ID" value="UER00080"/>
</dbReference>
<dbReference type="GO" id="GO:0005737">
    <property type="term" value="C:cytoplasm"/>
    <property type="evidence" value="ECO:0007669"/>
    <property type="project" value="UniProtKB-SubCell"/>
</dbReference>
<dbReference type="GO" id="GO:0005524">
    <property type="term" value="F:ATP binding"/>
    <property type="evidence" value="ECO:0007669"/>
    <property type="project" value="UniProtKB-UniRule"/>
</dbReference>
<dbReference type="GO" id="GO:0000287">
    <property type="term" value="F:magnesium ion binding"/>
    <property type="evidence" value="ECO:0007669"/>
    <property type="project" value="UniProtKB-UniRule"/>
</dbReference>
<dbReference type="GO" id="GO:0004478">
    <property type="term" value="F:methionine adenosyltransferase activity"/>
    <property type="evidence" value="ECO:0007669"/>
    <property type="project" value="UniProtKB-UniRule"/>
</dbReference>
<dbReference type="GO" id="GO:0006730">
    <property type="term" value="P:one-carbon metabolic process"/>
    <property type="evidence" value="ECO:0007669"/>
    <property type="project" value="UniProtKB-KW"/>
</dbReference>
<dbReference type="GO" id="GO:0006556">
    <property type="term" value="P:S-adenosylmethionine biosynthetic process"/>
    <property type="evidence" value="ECO:0007669"/>
    <property type="project" value="UniProtKB-UniRule"/>
</dbReference>
<dbReference type="CDD" id="cd18079">
    <property type="entry name" value="S-AdoMet_synt"/>
    <property type="match status" value="1"/>
</dbReference>
<dbReference type="FunFam" id="3.30.300.10:FF:000003">
    <property type="entry name" value="S-adenosylmethionine synthase"/>
    <property type="match status" value="1"/>
</dbReference>
<dbReference type="Gene3D" id="3.30.300.10">
    <property type="match status" value="3"/>
</dbReference>
<dbReference type="HAMAP" id="MF_00086">
    <property type="entry name" value="S_AdoMet_synth1"/>
    <property type="match status" value="1"/>
</dbReference>
<dbReference type="InterPro" id="IPR022631">
    <property type="entry name" value="ADOMET_SYNTHASE_CS"/>
</dbReference>
<dbReference type="InterPro" id="IPR022630">
    <property type="entry name" value="S-AdoMet_synt_C"/>
</dbReference>
<dbReference type="InterPro" id="IPR022629">
    <property type="entry name" value="S-AdoMet_synt_central"/>
</dbReference>
<dbReference type="InterPro" id="IPR022628">
    <property type="entry name" value="S-AdoMet_synt_N"/>
</dbReference>
<dbReference type="InterPro" id="IPR002133">
    <property type="entry name" value="S-AdoMet_synthetase"/>
</dbReference>
<dbReference type="InterPro" id="IPR022636">
    <property type="entry name" value="S-AdoMet_synthetase_sfam"/>
</dbReference>
<dbReference type="NCBIfam" id="TIGR01034">
    <property type="entry name" value="metK"/>
    <property type="match status" value="1"/>
</dbReference>
<dbReference type="PANTHER" id="PTHR11964">
    <property type="entry name" value="S-ADENOSYLMETHIONINE SYNTHETASE"/>
    <property type="match status" value="1"/>
</dbReference>
<dbReference type="Pfam" id="PF02773">
    <property type="entry name" value="S-AdoMet_synt_C"/>
    <property type="match status" value="1"/>
</dbReference>
<dbReference type="Pfam" id="PF02772">
    <property type="entry name" value="S-AdoMet_synt_M"/>
    <property type="match status" value="1"/>
</dbReference>
<dbReference type="Pfam" id="PF00438">
    <property type="entry name" value="S-AdoMet_synt_N"/>
    <property type="match status" value="1"/>
</dbReference>
<dbReference type="PIRSF" id="PIRSF000497">
    <property type="entry name" value="MAT"/>
    <property type="match status" value="1"/>
</dbReference>
<dbReference type="SUPFAM" id="SSF55973">
    <property type="entry name" value="S-adenosylmethionine synthetase"/>
    <property type="match status" value="3"/>
</dbReference>
<dbReference type="PROSITE" id="PS00376">
    <property type="entry name" value="ADOMET_SYNTHASE_1"/>
    <property type="match status" value="1"/>
</dbReference>
<dbReference type="PROSITE" id="PS00377">
    <property type="entry name" value="ADOMET_SYNTHASE_2"/>
    <property type="match status" value="1"/>
</dbReference>
<protein>
    <recommendedName>
        <fullName evidence="1">S-adenosylmethionine synthase</fullName>
        <shortName evidence="1">AdoMet synthase</shortName>
        <ecNumber evidence="1">2.5.1.6</ecNumber>
    </recommendedName>
    <alternativeName>
        <fullName evidence="1">MAT</fullName>
    </alternativeName>
    <alternativeName>
        <fullName evidence="1">Methionine adenosyltransferase</fullName>
    </alternativeName>
</protein>
<reference key="1">
    <citation type="journal article" date="2009" name="J. Bacteriol.">
        <title>Role of conjugative elements in the evolution of the multidrug-resistant pandemic clone Streptococcus pneumoniae Spain23F ST81.</title>
        <authorList>
            <person name="Croucher N.J."/>
            <person name="Walker D."/>
            <person name="Romero P."/>
            <person name="Lennard N."/>
            <person name="Paterson G.K."/>
            <person name="Bason N.C."/>
            <person name="Mitchell A.M."/>
            <person name="Quail M.A."/>
            <person name="Andrew P.W."/>
            <person name="Parkhill J."/>
            <person name="Bentley S.D."/>
            <person name="Mitchell T.J."/>
        </authorList>
    </citation>
    <scope>NUCLEOTIDE SEQUENCE [LARGE SCALE GENOMIC DNA]</scope>
    <source>
        <strain>ATCC 700669 / Spain 23F-1</strain>
    </source>
</reference>
<comment type="function">
    <text evidence="1">Catalyzes the formation of S-adenosylmethionine (AdoMet) from methionine and ATP. The overall synthetic reaction is composed of two sequential steps, AdoMet formation and the subsequent tripolyphosphate hydrolysis which occurs prior to release of AdoMet from the enzyme.</text>
</comment>
<comment type="catalytic activity">
    <reaction evidence="1">
        <text>L-methionine + ATP + H2O = S-adenosyl-L-methionine + phosphate + diphosphate</text>
        <dbReference type="Rhea" id="RHEA:21080"/>
        <dbReference type="ChEBI" id="CHEBI:15377"/>
        <dbReference type="ChEBI" id="CHEBI:30616"/>
        <dbReference type="ChEBI" id="CHEBI:33019"/>
        <dbReference type="ChEBI" id="CHEBI:43474"/>
        <dbReference type="ChEBI" id="CHEBI:57844"/>
        <dbReference type="ChEBI" id="CHEBI:59789"/>
        <dbReference type="EC" id="2.5.1.6"/>
    </reaction>
</comment>
<comment type="cofactor">
    <cofactor evidence="1">
        <name>Mg(2+)</name>
        <dbReference type="ChEBI" id="CHEBI:18420"/>
    </cofactor>
    <text evidence="1">Binds 2 divalent ions per subunit.</text>
</comment>
<comment type="cofactor">
    <cofactor evidence="1">
        <name>K(+)</name>
        <dbReference type="ChEBI" id="CHEBI:29103"/>
    </cofactor>
    <text evidence="1">Binds 1 potassium ion per subunit.</text>
</comment>
<comment type="pathway">
    <text evidence="1">Amino-acid biosynthesis; S-adenosyl-L-methionine biosynthesis; S-adenosyl-L-methionine from L-methionine: step 1/1.</text>
</comment>
<comment type="subunit">
    <text evidence="1">Homotetramer; dimer of dimers.</text>
</comment>
<comment type="subcellular location">
    <subcellularLocation>
        <location evidence="1">Cytoplasm</location>
    </subcellularLocation>
</comment>
<comment type="similarity">
    <text evidence="1">Belongs to the AdoMet synthase family.</text>
</comment>
<feature type="chain" id="PRO_1000196729" description="S-adenosylmethionine synthase">
    <location>
        <begin position="1"/>
        <end position="396"/>
    </location>
</feature>
<feature type="region of interest" description="Flexible loop" evidence="1">
    <location>
        <begin position="100"/>
        <end position="110"/>
    </location>
</feature>
<feature type="binding site" description="in other chain" evidence="1">
    <location>
        <position position="16"/>
    </location>
    <ligand>
        <name>ATP</name>
        <dbReference type="ChEBI" id="CHEBI:30616"/>
        <note>ligand shared between two neighboring subunits</note>
    </ligand>
</feature>
<feature type="binding site" evidence="1">
    <location>
        <position position="18"/>
    </location>
    <ligand>
        <name>Mg(2+)</name>
        <dbReference type="ChEBI" id="CHEBI:18420"/>
    </ligand>
</feature>
<feature type="binding site" evidence="1">
    <location>
        <position position="44"/>
    </location>
    <ligand>
        <name>K(+)</name>
        <dbReference type="ChEBI" id="CHEBI:29103"/>
    </ligand>
</feature>
<feature type="binding site" description="in other chain" evidence="1">
    <location>
        <position position="57"/>
    </location>
    <ligand>
        <name>L-methionine</name>
        <dbReference type="ChEBI" id="CHEBI:57844"/>
        <note>ligand shared between two neighboring subunits</note>
    </ligand>
</feature>
<feature type="binding site" description="in other chain" evidence="1">
    <location>
        <position position="100"/>
    </location>
    <ligand>
        <name>L-methionine</name>
        <dbReference type="ChEBI" id="CHEBI:57844"/>
        <note>ligand shared between two neighboring subunits</note>
    </ligand>
</feature>
<feature type="binding site" description="in other chain" evidence="1">
    <location>
        <begin position="175"/>
        <end position="177"/>
    </location>
    <ligand>
        <name>ATP</name>
        <dbReference type="ChEBI" id="CHEBI:30616"/>
        <note>ligand shared between two neighboring subunits</note>
    </ligand>
</feature>
<feature type="binding site" description="in other chain" evidence="1">
    <location>
        <begin position="242"/>
        <end position="243"/>
    </location>
    <ligand>
        <name>ATP</name>
        <dbReference type="ChEBI" id="CHEBI:30616"/>
        <note>ligand shared between two neighboring subunits</note>
    </ligand>
</feature>
<feature type="binding site" evidence="1">
    <location>
        <position position="251"/>
    </location>
    <ligand>
        <name>ATP</name>
        <dbReference type="ChEBI" id="CHEBI:30616"/>
        <note>ligand shared between two neighboring subunits</note>
    </ligand>
</feature>
<feature type="binding site" evidence="1">
    <location>
        <position position="251"/>
    </location>
    <ligand>
        <name>L-methionine</name>
        <dbReference type="ChEBI" id="CHEBI:57844"/>
        <note>ligand shared between two neighboring subunits</note>
    </ligand>
</feature>
<feature type="binding site" description="in other chain" evidence="1">
    <location>
        <begin position="257"/>
        <end position="258"/>
    </location>
    <ligand>
        <name>ATP</name>
        <dbReference type="ChEBI" id="CHEBI:30616"/>
        <note>ligand shared between two neighboring subunits</note>
    </ligand>
</feature>
<feature type="binding site" evidence="1">
    <location>
        <position position="274"/>
    </location>
    <ligand>
        <name>ATP</name>
        <dbReference type="ChEBI" id="CHEBI:30616"/>
        <note>ligand shared between two neighboring subunits</note>
    </ligand>
</feature>
<feature type="binding site" evidence="1">
    <location>
        <position position="278"/>
    </location>
    <ligand>
        <name>ATP</name>
        <dbReference type="ChEBI" id="CHEBI:30616"/>
        <note>ligand shared between two neighboring subunits</note>
    </ligand>
</feature>
<feature type="binding site" description="in other chain" evidence="1">
    <location>
        <position position="282"/>
    </location>
    <ligand>
        <name>L-methionine</name>
        <dbReference type="ChEBI" id="CHEBI:57844"/>
        <note>ligand shared between two neighboring subunits</note>
    </ligand>
</feature>
<proteinExistence type="inferred from homology"/>
<accession>B8ZNB7</accession>
<name>METK_STRPJ</name>
<evidence type="ECO:0000255" key="1">
    <source>
        <dbReference type="HAMAP-Rule" id="MF_00086"/>
    </source>
</evidence>